<dbReference type="EMBL" id="EF195233">
    <property type="protein sequence ID" value="ABQ12642.1"/>
    <property type="molecule type" value="Genomic_DNA"/>
</dbReference>
<dbReference type="EMBL" id="Z97335">
    <property type="protein sequence ID" value="CAB46002.1"/>
    <property type="status" value="ALT_SEQ"/>
    <property type="molecule type" value="Genomic_DNA"/>
</dbReference>
<dbReference type="EMBL" id="AL161538">
    <property type="protein sequence ID" value="CAB78460.1"/>
    <property type="status" value="ALT_SEQ"/>
    <property type="molecule type" value="Genomic_DNA"/>
</dbReference>
<dbReference type="EMBL" id="CP002687">
    <property type="protein sequence ID" value="AEE83390.2"/>
    <property type="molecule type" value="Genomic_DNA"/>
</dbReference>
<dbReference type="PIR" id="G85154">
    <property type="entry name" value="G85154"/>
</dbReference>
<dbReference type="RefSeq" id="NP_001319933.1">
    <property type="nucleotide sequence ID" value="NM_001340905.1"/>
</dbReference>
<dbReference type="SMR" id="O23277"/>
<dbReference type="FunCoup" id="O23277">
    <property type="interactions" value="163"/>
</dbReference>
<dbReference type="IntAct" id="O23277">
    <property type="interactions" value="1"/>
</dbReference>
<dbReference type="MINT" id="O23277"/>
<dbReference type="STRING" id="3702.O23277"/>
<dbReference type="GlyGen" id="O23277">
    <property type="glycosylation" value="1 site"/>
</dbReference>
<dbReference type="iPTMnet" id="O23277"/>
<dbReference type="PaxDb" id="3702-AT4G14180.1"/>
<dbReference type="ProteomicsDB" id="234838"/>
<dbReference type="EnsemblPlants" id="AT4G14180.1">
    <property type="protein sequence ID" value="AT4G14180.1"/>
    <property type="gene ID" value="AT4G14180"/>
</dbReference>
<dbReference type="GeneID" id="827058"/>
<dbReference type="Gramene" id="AT4G14180.1">
    <property type="protein sequence ID" value="AT4G14180.1"/>
    <property type="gene ID" value="AT4G14180"/>
</dbReference>
<dbReference type="KEGG" id="ath:AT4G14180"/>
<dbReference type="Araport" id="AT4G14180"/>
<dbReference type="TAIR" id="AT4G14180">
    <property type="gene designation" value="PRD1"/>
</dbReference>
<dbReference type="eggNOG" id="ENOG502QRT1">
    <property type="taxonomic scope" value="Eukaryota"/>
</dbReference>
<dbReference type="InParanoid" id="O23277"/>
<dbReference type="OMA" id="HCHDLCR"/>
<dbReference type="PhylomeDB" id="O23277"/>
<dbReference type="PRO" id="PR:O23277"/>
<dbReference type="Proteomes" id="UP000006548">
    <property type="component" value="Chromosome 4"/>
</dbReference>
<dbReference type="ExpressionAtlas" id="O23277">
    <property type="expression patterns" value="baseline and differential"/>
</dbReference>
<dbReference type="GO" id="GO:0005634">
    <property type="term" value="C:nucleus"/>
    <property type="evidence" value="ECO:0007669"/>
    <property type="project" value="UniProtKB-SubCell"/>
</dbReference>
<dbReference type="GO" id="GO:0003677">
    <property type="term" value="F:DNA binding"/>
    <property type="evidence" value="ECO:0007669"/>
    <property type="project" value="UniProtKB-KW"/>
</dbReference>
<dbReference type="GO" id="GO:0016787">
    <property type="term" value="F:hydrolase activity"/>
    <property type="evidence" value="ECO:0007669"/>
    <property type="project" value="UniProtKB-KW"/>
</dbReference>
<dbReference type="GO" id="GO:0042138">
    <property type="term" value="P:meiotic DNA double-strand break formation"/>
    <property type="evidence" value="ECO:0007669"/>
    <property type="project" value="InterPro"/>
</dbReference>
<dbReference type="InterPro" id="IPR016024">
    <property type="entry name" value="ARM-type_fold"/>
</dbReference>
<dbReference type="InterPro" id="IPR044968">
    <property type="entry name" value="PRD1"/>
</dbReference>
<dbReference type="PANTHER" id="PTHR36379">
    <property type="entry name" value="PROTEIN PRD1"/>
    <property type="match status" value="1"/>
</dbReference>
<dbReference type="PANTHER" id="PTHR36379:SF1">
    <property type="entry name" value="PUTATIVE RECOMBINATION INITIATION DEFECT 1-RELATED"/>
    <property type="match status" value="1"/>
</dbReference>
<dbReference type="SUPFAM" id="SSF48371">
    <property type="entry name" value="ARM repeat"/>
    <property type="match status" value="1"/>
</dbReference>
<organism>
    <name type="scientific">Arabidopsis thaliana</name>
    <name type="common">Mouse-ear cress</name>
    <dbReference type="NCBI Taxonomy" id="3702"/>
    <lineage>
        <taxon>Eukaryota</taxon>
        <taxon>Viridiplantae</taxon>
        <taxon>Streptophyta</taxon>
        <taxon>Embryophyta</taxon>
        <taxon>Tracheophyta</taxon>
        <taxon>Spermatophyta</taxon>
        <taxon>Magnoliopsida</taxon>
        <taxon>eudicotyledons</taxon>
        <taxon>Gunneridae</taxon>
        <taxon>Pentapetalae</taxon>
        <taxon>rosids</taxon>
        <taxon>malvids</taxon>
        <taxon>Brassicales</taxon>
        <taxon>Brassicaceae</taxon>
        <taxon>Camelineae</taxon>
        <taxon>Arabidopsis</taxon>
    </lineage>
</organism>
<evidence type="ECO:0000256" key="1">
    <source>
        <dbReference type="SAM" id="MobiDB-lite"/>
    </source>
</evidence>
<evidence type="ECO:0000269" key="2">
    <source>
    </source>
</evidence>
<evidence type="ECO:0000269" key="3">
    <source>
    </source>
</evidence>
<evidence type="ECO:0000269" key="4">
    <source>
    </source>
</evidence>
<evidence type="ECO:0000303" key="5">
    <source>
    </source>
</evidence>
<evidence type="ECO:0000305" key="6"/>
<evidence type="ECO:0000312" key="7">
    <source>
        <dbReference type="Araport" id="AT4G14180"/>
    </source>
</evidence>
<evidence type="ECO:0000312" key="8">
    <source>
        <dbReference type="EMBL" id="CAB46002.1"/>
    </source>
</evidence>
<evidence type="ECO:0000312" key="9">
    <source>
        <dbReference type="EMBL" id="CAB78460.1"/>
    </source>
</evidence>
<name>PRD1_ARATH</name>
<comment type="function">
    <text evidence="2 3">Involved in DNA cleavage that forms the double-strand breaks (DSB) that initiate meiotic recombination.</text>
</comment>
<comment type="subunit">
    <text evidence="2 4">Interacts with SPO11-1 (PubMed:17762870, PubMed:28855712). According to PubMed:28855712, may interact with SPO11-2; this is in contradiction with PubMed:9461215 which claims that it seems to not interact with SPO11-2 (PubMed:17762870, PubMed:28855712). Binds to DFO, PRD3 and MTOPVIB (PubMed:28855712). Facilitates an interaction between PRD3 and DFO (PubMed:28855712).</text>
</comment>
<comment type="subcellular location">
    <subcellularLocation>
        <location evidence="2">Nucleus</location>
    </subcellularLocation>
</comment>
<comment type="tissue specificity">
    <text evidence="2">Expressed in flower buds.</text>
</comment>
<comment type="domain">
    <text>The N-terminal domain (1-802) but not the C-terminal domain (755-1330) is essential for interaction with SPO11-1.</text>
</comment>
<comment type="disruption phenotype">
    <text evidence="2 3">Plants exhibit reduced fertility and meiotic defects (PubMed:17762870). Drastic decrease in chiasma formation at metaphase I associated with an absence of synapsis in prophase, due to the inability to make double-strand breaks (DSB) (PubMed:19763177).</text>
</comment>
<comment type="sequence caution" evidence="6">
    <conflict type="erroneous gene model prediction">
        <sequence resource="EMBL-CDS" id="CAB46002"/>
    </conflict>
</comment>
<comment type="sequence caution" evidence="6">
    <conflict type="erroneous gene model prediction">
        <sequence resource="EMBL-CDS" id="CAB78460"/>
    </conflict>
</comment>
<protein>
    <recommendedName>
        <fullName evidence="5">Protein PUTATIVE RECOMBINATION INITIATION DEFECT 1</fullName>
        <shortName evidence="5">AtPRD1</shortName>
        <shortName evidence="5">Protein PRD1</shortName>
    </recommendedName>
</protein>
<gene>
    <name evidence="5" type="primary">PRD1</name>
    <name evidence="7" type="ordered locus">At4g14180</name>
    <name evidence="8" type="ORF">dl3130w</name>
    <name evidence="9" type="ORF">FCAALL.114</name>
</gene>
<accession>O23277</accession>
<accession>A8QW54</accession>
<accession>F4JUM6</accession>
<reference key="1">
    <citation type="journal article" date="2007" name="EMBO J.">
        <title>AtPRD1 is required for meiotic double strand break formation in Arabidopsis thaliana.</title>
        <authorList>
            <person name="De Muyt A."/>
            <person name="Vezon D."/>
            <person name="Gendrot G."/>
            <person name="Gallois J.-L."/>
            <person name="Stevens R."/>
            <person name="Grelon M."/>
        </authorList>
    </citation>
    <scope>NUCLEOTIDE SEQUENCE [GENOMIC DNA / MRNA]</scope>
    <scope>FUNCTION</scope>
    <scope>TISSUE SPECIFICITY</scope>
    <scope>SUBCELLULAR LOCATION</scope>
    <scope>INTERACTION WITH SPO11-1 AND SPO11-2</scope>
    <scope>DISRUPTION PHENOTYPE</scope>
    <source>
        <strain>cv. Wassilewskija</strain>
    </source>
</reference>
<reference key="2">
    <citation type="journal article" date="1998" name="Nature">
        <title>Analysis of 1.9 Mb of contiguous sequence from chromosome 4 of Arabidopsis thaliana.</title>
        <authorList>
            <person name="Bevan M."/>
            <person name="Bancroft I."/>
            <person name="Bent E."/>
            <person name="Love K."/>
            <person name="Goodman H.M."/>
            <person name="Dean C."/>
            <person name="Bergkamp R."/>
            <person name="Dirkse W."/>
            <person name="van Staveren M."/>
            <person name="Stiekema W."/>
            <person name="Drost L."/>
            <person name="Ridley P."/>
            <person name="Hudson S.-A."/>
            <person name="Patel K."/>
            <person name="Murphy G."/>
            <person name="Piffanelli P."/>
            <person name="Wedler H."/>
            <person name="Wedler E."/>
            <person name="Wambutt R."/>
            <person name="Weitzenegger T."/>
            <person name="Pohl T."/>
            <person name="Terryn N."/>
            <person name="Gielen J."/>
            <person name="Villarroel R."/>
            <person name="De Clercq R."/>
            <person name="van Montagu M."/>
            <person name="Lecharny A."/>
            <person name="Aubourg S."/>
            <person name="Gy I."/>
            <person name="Kreis M."/>
            <person name="Lao N."/>
            <person name="Kavanagh T."/>
            <person name="Hempel S."/>
            <person name="Kotter P."/>
            <person name="Entian K.-D."/>
            <person name="Rieger M."/>
            <person name="Schaefer M."/>
            <person name="Funk B."/>
            <person name="Mueller-Auer S."/>
            <person name="Silvey M."/>
            <person name="James R."/>
            <person name="Monfort A."/>
            <person name="Pons A."/>
            <person name="Puigdomenech P."/>
            <person name="Douka A."/>
            <person name="Voukelatou E."/>
            <person name="Milioni D."/>
            <person name="Hatzopoulos P."/>
            <person name="Piravandi E."/>
            <person name="Obermaier B."/>
            <person name="Hilbert H."/>
            <person name="Duesterhoeft A."/>
            <person name="Moores T."/>
            <person name="Jones J.D.G."/>
            <person name="Eneva T."/>
            <person name="Palme K."/>
            <person name="Benes V."/>
            <person name="Rechmann S."/>
            <person name="Ansorge W."/>
            <person name="Cooke R."/>
            <person name="Berger C."/>
            <person name="Delseny M."/>
            <person name="Voet M."/>
            <person name="Volckaert G."/>
            <person name="Mewes H.-W."/>
            <person name="Klosterman S."/>
            <person name="Schueller C."/>
            <person name="Chalwatzis N."/>
        </authorList>
    </citation>
    <scope>NUCLEOTIDE SEQUENCE [LARGE SCALE GENOMIC DNA]</scope>
    <source>
        <strain>cv. Columbia</strain>
    </source>
</reference>
<reference key="3">
    <citation type="journal article" date="1999" name="Nature">
        <title>Sequence and analysis of chromosome 4 of the plant Arabidopsis thaliana.</title>
        <authorList>
            <person name="Mayer K.F.X."/>
            <person name="Schueller C."/>
            <person name="Wambutt R."/>
            <person name="Murphy G."/>
            <person name="Volckaert G."/>
            <person name="Pohl T."/>
            <person name="Duesterhoeft A."/>
            <person name="Stiekema W."/>
            <person name="Entian K.-D."/>
            <person name="Terryn N."/>
            <person name="Harris B."/>
            <person name="Ansorge W."/>
            <person name="Brandt P."/>
            <person name="Grivell L.A."/>
            <person name="Rieger M."/>
            <person name="Weichselgartner M."/>
            <person name="de Simone V."/>
            <person name="Obermaier B."/>
            <person name="Mache R."/>
            <person name="Mueller M."/>
            <person name="Kreis M."/>
            <person name="Delseny M."/>
            <person name="Puigdomenech P."/>
            <person name="Watson M."/>
            <person name="Schmidtheini T."/>
            <person name="Reichert B."/>
            <person name="Portetelle D."/>
            <person name="Perez-Alonso M."/>
            <person name="Boutry M."/>
            <person name="Bancroft I."/>
            <person name="Vos P."/>
            <person name="Hoheisel J."/>
            <person name="Zimmermann W."/>
            <person name="Wedler H."/>
            <person name="Ridley P."/>
            <person name="Langham S.-A."/>
            <person name="McCullagh B."/>
            <person name="Bilham L."/>
            <person name="Robben J."/>
            <person name="van der Schueren J."/>
            <person name="Grymonprez B."/>
            <person name="Chuang Y.-J."/>
            <person name="Vandenbussche F."/>
            <person name="Braeken M."/>
            <person name="Weltjens I."/>
            <person name="Voet M."/>
            <person name="Bastiaens I."/>
            <person name="Aert R."/>
            <person name="Defoor E."/>
            <person name="Weitzenegger T."/>
            <person name="Bothe G."/>
            <person name="Ramsperger U."/>
            <person name="Hilbert H."/>
            <person name="Braun M."/>
            <person name="Holzer E."/>
            <person name="Brandt A."/>
            <person name="Peters S."/>
            <person name="van Staveren M."/>
            <person name="Dirkse W."/>
            <person name="Mooijman P."/>
            <person name="Klein Lankhorst R."/>
            <person name="Rose M."/>
            <person name="Hauf J."/>
            <person name="Koetter P."/>
            <person name="Berneiser S."/>
            <person name="Hempel S."/>
            <person name="Feldpausch M."/>
            <person name="Lamberth S."/>
            <person name="Van den Daele H."/>
            <person name="De Keyser A."/>
            <person name="Buysshaert C."/>
            <person name="Gielen J."/>
            <person name="Villarroel R."/>
            <person name="De Clercq R."/>
            <person name="van Montagu M."/>
            <person name="Rogers J."/>
            <person name="Cronin A."/>
            <person name="Quail M.A."/>
            <person name="Bray-Allen S."/>
            <person name="Clark L."/>
            <person name="Doggett J."/>
            <person name="Hall S."/>
            <person name="Kay M."/>
            <person name="Lennard N."/>
            <person name="McLay K."/>
            <person name="Mayes R."/>
            <person name="Pettett A."/>
            <person name="Rajandream M.A."/>
            <person name="Lyne M."/>
            <person name="Benes V."/>
            <person name="Rechmann S."/>
            <person name="Borkova D."/>
            <person name="Bloecker H."/>
            <person name="Scharfe M."/>
            <person name="Grimm M."/>
            <person name="Loehnert T.-H."/>
            <person name="Dose S."/>
            <person name="de Haan M."/>
            <person name="Maarse A.C."/>
            <person name="Schaefer M."/>
            <person name="Mueller-Auer S."/>
            <person name="Gabel C."/>
            <person name="Fuchs M."/>
            <person name="Fartmann B."/>
            <person name="Granderath K."/>
            <person name="Dauner D."/>
            <person name="Herzl A."/>
            <person name="Neumann S."/>
            <person name="Argiriou A."/>
            <person name="Vitale D."/>
            <person name="Liguori R."/>
            <person name="Piravandi E."/>
            <person name="Massenet O."/>
            <person name="Quigley F."/>
            <person name="Clabauld G."/>
            <person name="Muendlein A."/>
            <person name="Felber R."/>
            <person name="Schnabl S."/>
            <person name="Hiller R."/>
            <person name="Schmidt W."/>
            <person name="Lecharny A."/>
            <person name="Aubourg S."/>
            <person name="Chefdor F."/>
            <person name="Cooke R."/>
            <person name="Berger C."/>
            <person name="Monfort A."/>
            <person name="Casacuberta E."/>
            <person name="Gibbons T."/>
            <person name="Weber N."/>
            <person name="Vandenbol M."/>
            <person name="Bargues M."/>
            <person name="Terol J."/>
            <person name="Torres A."/>
            <person name="Perez-Perez A."/>
            <person name="Purnelle B."/>
            <person name="Bent E."/>
            <person name="Johnson S."/>
            <person name="Tacon D."/>
            <person name="Jesse T."/>
            <person name="Heijnen L."/>
            <person name="Schwarz S."/>
            <person name="Scholler P."/>
            <person name="Heber S."/>
            <person name="Francs P."/>
            <person name="Bielke C."/>
            <person name="Frishman D."/>
            <person name="Haase D."/>
            <person name="Lemcke K."/>
            <person name="Mewes H.-W."/>
            <person name="Stocker S."/>
            <person name="Zaccaria P."/>
            <person name="Bevan M."/>
            <person name="Wilson R.K."/>
            <person name="de la Bastide M."/>
            <person name="Habermann K."/>
            <person name="Parnell L."/>
            <person name="Dedhia N."/>
            <person name="Gnoj L."/>
            <person name="Schutz K."/>
            <person name="Huang E."/>
            <person name="Spiegel L."/>
            <person name="Sekhon M."/>
            <person name="Murray J."/>
            <person name="Sheet P."/>
            <person name="Cordes M."/>
            <person name="Abu-Threideh J."/>
            <person name="Stoneking T."/>
            <person name="Kalicki J."/>
            <person name="Graves T."/>
            <person name="Harmon G."/>
            <person name="Edwards J."/>
            <person name="Latreille P."/>
            <person name="Courtney L."/>
            <person name="Cloud J."/>
            <person name="Abbott A."/>
            <person name="Scott K."/>
            <person name="Johnson D."/>
            <person name="Minx P."/>
            <person name="Bentley D."/>
            <person name="Fulton B."/>
            <person name="Miller N."/>
            <person name="Greco T."/>
            <person name="Kemp K."/>
            <person name="Kramer J."/>
            <person name="Fulton L."/>
            <person name="Mardis E."/>
            <person name="Dante M."/>
            <person name="Pepin K."/>
            <person name="Hillier L.W."/>
            <person name="Nelson J."/>
            <person name="Spieth J."/>
            <person name="Ryan E."/>
            <person name="Andrews S."/>
            <person name="Geisel C."/>
            <person name="Layman D."/>
            <person name="Du H."/>
            <person name="Ali J."/>
            <person name="Berghoff A."/>
            <person name="Jones K."/>
            <person name="Drone K."/>
            <person name="Cotton M."/>
            <person name="Joshu C."/>
            <person name="Antonoiu B."/>
            <person name="Zidanic M."/>
            <person name="Strong C."/>
            <person name="Sun H."/>
            <person name="Lamar B."/>
            <person name="Yordan C."/>
            <person name="Ma P."/>
            <person name="Zhong J."/>
            <person name="Preston R."/>
            <person name="Vil D."/>
            <person name="Shekher M."/>
            <person name="Matero A."/>
            <person name="Shah R."/>
            <person name="Swaby I.K."/>
            <person name="O'Shaughnessy A."/>
            <person name="Rodriguez M."/>
            <person name="Hoffman J."/>
            <person name="Till S."/>
            <person name="Granat S."/>
            <person name="Shohdy N."/>
            <person name="Hasegawa A."/>
            <person name="Hameed A."/>
            <person name="Lodhi M."/>
            <person name="Johnson A."/>
            <person name="Chen E."/>
            <person name="Marra M.A."/>
            <person name="Martienssen R."/>
            <person name="McCombie W.R."/>
        </authorList>
    </citation>
    <scope>NUCLEOTIDE SEQUENCE [LARGE SCALE GENOMIC DNA]</scope>
    <source>
        <strain>cv. Columbia</strain>
    </source>
</reference>
<reference key="4">
    <citation type="journal article" date="2017" name="Plant J.">
        <title>Araport11: a complete reannotation of the Arabidopsis thaliana reference genome.</title>
        <authorList>
            <person name="Cheng C.Y."/>
            <person name="Krishnakumar V."/>
            <person name="Chan A.P."/>
            <person name="Thibaud-Nissen F."/>
            <person name="Schobel S."/>
            <person name="Town C.D."/>
        </authorList>
    </citation>
    <scope>GENOME REANNOTATION</scope>
    <source>
        <strain>cv. Columbia</strain>
    </source>
</reference>
<reference key="5">
    <citation type="journal article" date="2009" name="PLoS Genet.">
        <title>A high throughput genetic screen identifies new early meiotic recombination functions in Arabidopsis thaliana.</title>
        <authorList>
            <person name="De Muyt A."/>
            <person name="Pereira L."/>
            <person name="Vezon D."/>
            <person name="Chelysheva L."/>
            <person name="Gendrot G."/>
            <person name="Chambon A."/>
            <person name="Laine-Choinard S."/>
            <person name="Pelletier G."/>
            <person name="Mercier R."/>
            <person name="Nogue F."/>
            <person name="Grelon M."/>
        </authorList>
    </citation>
    <scope>FUNCTION</scope>
    <scope>DISRUPTION PHENOTYPE</scope>
</reference>
<reference key="6">
    <citation type="journal article" date="2017" name="Sci. Rep.">
        <title>MTOPVIB interacts with AtPRD1 and plays important roles in formation of meiotic DNA double-strand breaks in Arabidopsis.</title>
        <authorList>
            <person name="Tang Y."/>
            <person name="Yin Z."/>
            <person name="Zeng Y."/>
            <person name="Zhang Q."/>
            <person name="Chen L."/>
            <person name="He Y."/>
            <person name="Lu P."/>
            <person name="Ye D."/>
            <person name="Zhang X."/>
        </authorList>
    </citation>
    <scope>INTERACTION WITH DFO; PRD3; SPO11-1; SPO11-2 AND MTOPVIB</scope>
    <source>
        <strain>cv. Columbia</strain>
        <strain>cv. Landsberg erecta</strain>
    </source>
</reference>
<sequence length="1330" mass="149133">MFFQHSQLQNSDHLLHESMADSNHQSLSPPCANGHRSTISLRDDQGGTFCLICFSNLVSDPRIPTVHVSYALHQLSIAISEPIFLRTLLSSHIHFLVSPLVHALSSIDDAPIAIQIMDMISLLCSVEESSIGEDFVERISDQLSSGALGWSRRQLHMLHCFGVLMSCENININSHIRDKEALVCQLVEGLQLPSEEIRGEILFALYKFSALQFTEQNVDGIEVLSLLCPKLLCLSLEALAKTQRDDVRLNCVALLTILAQQGLLANSHSNSASSMSLDEVDDDPMQTAENVAARPCLNVLFAEAIKGPLLSTDSEVQIKTLDLIFHYISQESTPSKQIQVMVEENVADYIFEILRLSECKDQVVNSCLRVLDLFSLAEHSFRKRLVIGFPSVIRVLHYVGEVPCHPFQIQTLKLISSCISDFPGIASSSQVQEIALVLKKMLERYYSQEMGLFPDAFAIICSVFVSLMKTPSFGETADVLTSLQESLRHSILASLSLPEKDSTQILHAVYLLNEVYVYCTASTSINKTICIELRHCVIDVCTSHLLPWFLSDVNEVNEEATLGIMETFHSILLQNSDIQAKEFAELLVSADWFSFSFGCLGNFCTDNMKQRIYLMLSSLVDILLEQKTGSHIRDALHCLPSDPQDLLFLLGQASSNNQELASCQSAALLIFHTSSIYNDRLADDKLVLASLEQYIILNKTSLICAISDSPALLNLVNLYGLCRSLQNERYQISYSLEAERIIFHLLNEYEWDLGSINIHLESLKWLFQQESISKSLIYQIQKISRNNLIGNEVHNVYGDGRQRSLTYWFAKLISEGDNYAATLLVNLLTQLAEKEEQENDVISILNLMNTIVSIFPTASNNLSMNGIGSVIHRLVSGFSNSSLGTSFRTLLLLVFNILTSVQPAVLMIDESWYAVSIKLLNFLSLRDTAIKQNHEDMVVIGILSLVLYHSSDGALVEASRNIVSNSYLVSAINTVVDVACSKGPALTQCQDETNIGEALAFTLLLYFFSLRSLQIVLAGAVDWQTFFGTSTSLETLPVVCIHCHNLCRLMHFGAPQIKLIASYCLLELLTGLSEQVDIKKEQLQCSSSYLKSMKAVLGGLVFCDDIRVATNSALCLSMILGWEDMEGRTEMLKTSSWYRFIAEEMSVSLAMPCSASSTYVNHHKPAVYLTVAMLRLKNKPVWLRTVFDESCISSMIQNLNGINISREIVILFRELMQAELLNSQQVTKLDRAFQECRKQMHRNGTRDETVEEQVQRKIPSIHDHSEFCNYLVHLMVSNSFGHPSESETYTQKKKQILDEMEQFSELISTREGRVSPIQEETRQMQTERIV</sequence>
<keyword id="KW-0238">DNA-binding</keyword>
<keyword id="KW-0378">Hydrolase</keyword>
<keyword id="KW-0469">Meiosis</keyword>
<keyword id="KW-0539">Nucleus</keyword>
<keyword id="KW-1185">Reference proteome</keyword>
<feature type="chain" id="PRO_0000346113" description="Protein PUTATIVE RECOMBINATION INITIATION DEFECT 1">
    <location>
        <begin position="1"/>
        <end position="1330"/>
    </location>
</feature>
<feature type="region of interest" description="Disordered" evidence="1">
    <location>
        <begin position="1310"/>
        <end position="1330"/>
    </location>
</feature>
<feature type="sequence conflict" description="In Ref. 1; ABQ12642." evidence="6" ref="1">
    <original>N</original>
    <variation>D</variation>
    <location>
        <position position="171"/>
    </location>
</feature>
<feature type="sequence conflict" description="In Ref. 1; ABQ12642." evidence="6" ref="1">
    <original>V</original>
    <variation>I</variation>
    <location>
        <position position="515"/>
    </location>
</feature>
<feature type="sequence conflict" description="In Ref. 1; ABQ12642." evidence="6" ref="1">
    <original>KTI</original>
    <variation>MTS</variation>
    <location>
        <begin position="527"/>
        <end position="529"/>
    </location>
</feature>
<feature type="sequence conflict" description="In Ref. 1; ABQ12642." evidence="6" ref="1">
    <original>I</original>
    <variation>T</variation>
    <location>
        <position position="842"/>
    </location>
</feature>
<feature type="sequence conflict" description="In Ref. 1; ABQ12642." evidence="6" ref="1">
    <original>I</original>
    <variation>V</variation>
    <location>
        <position position="871"/>
    </location>
</feature>
<feature type="sequence conflict" description="In Ref. 1; ABQ12642." evidence="6" ref="1">
    <original>R</original>
    <variation>K</variation>
    <location>
        <position position="888"/>
    </location>
</feature>
<feature type="sequence conflict" description="In Ref. 1; ABQ12642." evidence="6" ref="1">
    <original>T</original>
    <variation>A</variation>
    <location>
        <position position="1025"/>
    </location>
</feature>
<feature type="sequence conflict" description="In Ref. 1; ABQ12642." evidence="6" ref="1">
    <original>H</original>
    <variation>Y</variation>
    <location>
        <position position="1042"/>
    </location>
</feature>
<feature type="sequence conflict" description="In Ref. 1; ABQ12642." evidence="6" ref="1">
    <original>M</original>
    <variation>L</variation>
    <location>
        <position position="1151"/>
    </location>
</feature>
<feature type="sequence conflict" description="In Ref. 1; ABQ12642." evidence="6" ref="1">
    <original>F</original>
    <variation>L</variation>
    <location>
        <position position="1303"/>
    </location>
</feature>
<proteinExistence type="evidence at protein level"/>